<dbReference type="EC" id="4.1.1.11" evidence="1"/>
<dbReference type="EMBL" id="AE015928">
    <property type="protein sequence ID" value="AAO79414.1"/>
    <property type="molecule type" value="Genomic_DNA"/>
</dbReference>
<dbReference type="RefSeq" id="NP_813220.1">
    <property type="nucleotide sequence ID" value="NC_004663.1"/>
</dbReference>
<dbReference type="RefSeq" id="WP_008759980.1">
    <property type="nucleotide sequence ID" value="NZ_UYXG01000010.1"/>
</dbReference>
<dbReference type="SMR" id="Q89ZR7"/>
<dbReference type="FunCoup" id="Q89ZR7">
    <property type="interactions" value="309"/>
</dbReference>
<dbReference type="STRING" id="226186.BT_4309"/>
<dbReference type="PaxDb" id="226186-BT_4309"/>
<dbReference type="EnsemblBacteria" id="AAO79414">
    <property type="protein sequence ID" value="AAO79414"/>
    <property type="gene ID" value="BT_4309"/>
</dbReference>
<dbReference type="GeneID" id="69589099"/>
<dbReference type="KEGG" id="bth:BT_4309"/>
<dbReference type="PATRIC" id="fig|226186.12.peg.4385"/>
<dbReference type="eggNOG" id="COG0853">
    <property type="taxonomic scope" value="Bacteria"/>
</dbReference>
<dbReference type="HOGENOM" id="CLU_115305_2_0_10"/>
<dbReference type="InParanoid" id="Q89ZR7"/>
<dbReference type="OrthoDB" id="9803983at2"/>
<dbReference type="UniPathway" id="UPA00028">
    <property type="reaction ID" value="UER00002"/>
</dbReference>
<dbReference type="Proteomes" id="UP000001414">
    <property type="component" value="Chromosome"/>
</dbReference>
<dbReference type="GO" id="GO:0005829">
    <property type="term" value="C:cytosol"/>
    <property type="evidence" value="ECO:0000318"/>
    <property type="project" value="GO_Central"/>
</dbReference>
<dbReference type="GO" id="GO:0004068">
    <property type="term" value="F:aspartate 1-decarboxylase activity"/>
    <property type="evidence" value="ECO:0000318"/>
    <property type="project" value="GO_Central"/>
</dbReference>
<dbReference type="GO" id="GO:0006523">
    <property type="term" value="P:alanine biosynthetic process"/>
    <property type="evidence" value="ECO:0000318"/>
    <property type="project" value="GO_Central"/>
</dbReference>
<dbReference type="GO" id="GO:0015940">
    <property type="term" value="P:pantothenate biosynthetic process"/>
    <property type="evidence" value="ECO:0000318"/>
    <property type="project" value="GO_Central"/>
</dbReference>
<dbReference type="CDD" id="cd06919">
    <property type="entry name" value="Asp_decarbox"/>
    <property type="match status" value="1"/>
</dbReference>
<dbReference type="Gene3D" id="2.40.40.20">
    <property type="match status" value="1"/>
</dbReference>
<dbReference type="HAMAP" id="MF_00446">
    <property type="entry name" value="PanD"/>
    <property type="match status" value="1"/>
</dbReference>
<dbReference type="InterPro" id="IPR009010">
    <property type="entry name" value="Asp_de-COase-like_dom_sf"/>
</dbReference>
<dbReference type="InterPro" id="IPR003190">
    <property type="entry name" value="Asp_decarbox"/>
</dbReference>
<dbReference type="NCBIfam" id="TIGR00223">
    <property type="entry name" value="panD"/>
    <property type="match status" value="1"/>
</dbReference>
<dbReference type="PANTHER" id="PTHR21012">
    <property type="entry name" value="ASPARTATE 1-DECARBOXYLASE"/>
    <property type="match status" value="1"/>
</dbReference>
<dbReference type="PANTHER" id="PTHR21012:SF0">
    <property type="entry name" value="ASPARTATE 1-DECARBOXYLASE"/>
    <property type="match status" value="1"/>
</dbReference>
<dbReference type="Pfam" id="PF02261">
    <property type="entry name" value="Asp_decarbox"/>
    <property type="match status" value="1"/>
</dbReference>
<dbReference type="PIRSF" id="PIRSF006246">
    <property type="entry name" value="Asp_decarbox"/>
    <property type="match status" value="1"/>
</dbReference>
<dbReference type="SUPFAM" id="SSF50692">
    <property type="entry name" value="ADC-like"/>
    <property type="match status" value="1"/>
</dbReference>
<proteinExistence type="inferred from homology"/>
<reference key="1">
    <citation type="journal article" date="2003" name="Science">
        <title>A genomic view of the human-Bacteroides thetaiotaomicron symbiosis.</title>
        <authorList>
            <person name="Xu J."/>
            <person name="Bjursell M.K."/>
            <person name="Himrod J."/>
            <person name="Deng S."/>
            <person name="Carmichael L.K."/>
            <person name="Chiang H.C."/>
            <person name="Hooper L.V."/>
            <person name="Gordon J.I."/>
        </authorList>
    </citation>
    <scope>NUCLEOTIDE SEQUENCE [LARGE SCALE GENOMIC DNA]</scope>
    <source>
        <strain>ATCC 29148 / DSM 2079 / JCM 5827 / CCUG 10774 / NCTC 10582 / VPI-5482 / E50</strain>
    </source>
</reference>
<evidence type="ECO:0000255" key="1">
    <source>
        <dbReference type="HAMAP-Rule" id="MF_00446"/>
    </source>
</evidence>
<name>PAND_BACTN</name>
<protein>
    <recommendedName>
        <fullName evidence="1">Aspartate 1-decarboxylase</fullName>
        <ecNumber evidence="1">4.1.1.11</ecNumber>
    </recommendedName>
    <alternativeName>
        <fullName evidence="1">Aspartate alpha-decarboxylase</fullName>
    </alternativeName>
    <component>
        <recommendedName>
            <fullName evidence="1">Aspartate 1-decarboxylase beta chain</fullName>
        </recommendedName>
    </component>
    <component>
        <recommendedName>
            <fullName evidence="1">Aspartate 1-decarboxylase alpha chain</fullName>
        </recommendedName>
    </component>
</protein>
<sequence>MMIEVLKSKIHCARVTEANLNYMGSITIDEDLLDAANMIPGEKVYIADNNNGERFETYIIKGERGSGKICLNGAAARKVQPDDIVIIMSYALMDFEEAKSFKPTVIFPDPATNSVVK</sequence>
<feature type="chain" id="PRO_0000023037" description="Aspartate 1-decarboxylase beta chain" evidence="1">
    <location>
        <begin position="1"/>
        <end position="24"/>
    </location>
</feature>
<feature type="chain" id="PRO_0000023038" description="Aspartate 1-decarboxylase alpha chain" evidence="1">
    <location>
        <begin position="25"/>
        <end position="117"/>
    </location>
</feature>
<feature type="active site" description="Schiff-base intermediate with substrate; via pyruvic acid" evidence="1">
    <location>
        <position position="25"/>
    </location>
</feature>
<feature type="active site" description="Proton donor" evidence="1">
    <location>
        <position position="58"/>
    </location>
</feature>
<feature type="binding site" evidence="1">
    <location>
        <position position="57"/>
    </location>
    <ligand>
        <name>substrate</name>
    </ligand>
</feature>
<feature type="binding site" evidence="1">
    <location>
        <begin position="73"/>
        <end position="75"/>
    </location>
    <ligand>
        <name>substrate</name>
    </ligand>
</feature>
<feature type="modified residue" description="Pyruvic acid (Ser)" evidence="1">
    <location>
        <position position="25"/>
    </location>
</feature>
<keyword id="KW-0068">Autocatalytic cleavage</keyword>
<keyword id="KW-0963">Cytoplasm</keyword>
<keyword id="KW-0210">Decarboxylase</keyword>
<keyword id="KW-0456">Lyase</keyword>
<keyword id="KW-0566">Pantothenate biosynthesis</keyword>
<keyword id="KW-0670">Pyruvate</keyword>
<keyword id="KW-1185">Reference proteome</keyword>
<keyword id="KW-0704">Schiff base</keyword>
<keyword id="KW-0865">Zymogen</keyword>
<accession>Q89ZR7</accession>
<comment type="function">
    <text evidence="1">Catalyzes the pyruvoyl-dependent decarboxylation of aspartate to produce beta-alanine.</text>
</comment>
<comment type="catalytic activity">
    <reaction evidence="1">
        <text>L-aspartate + H(+) = beta-alanine + CO2</text>
        <dbReference type="Rhea" id="RHEA:19497"/>
        <dbReference type="ChEBI" id="CHEBI:15378"/>
        <dbReference type="ChEBI" id="CHEBI:16526"/>
        <dbReference type="ChEBI" id="CHEBI:29991"/>
        <dbReference type="ChEBI" id="CHEBI:57966"/>
        <dbReference type="EC" id="4.1.1.11"/>
    </reaction>
</comment>
<comment type="cofactor">
    <cofactor evidence="1">
        <name>pyruvate</name>
        <dbReference type="ChEBI" id="CHEBI:15361"/>
    </cofactor>
    <text evidence="1">Binds 1 pyruvoyl group covalently per subunit.</text>
</comment>
<comment type="pathway">
    <text evidence="1">Cofactor biosynthesis; (R)-pantothenate biosynthesis; beta-alanine from L-aspartate: step 1/1.</text>
</comment>
<comment type="subunit">
    <text evidence="1">Heterooctamer of four alpha and four beta subunits.</text>
</comment>
<comment type="subcellular location">
    <subcellularLocation>
        <location evidence="1">Cytoplasm</location>
    </subcellularLocation>
</comment>
<comment type="PTM">
    <text evidence="1">Is synthesized initially as an inactive proenzyme, which is activated by self-cleavage at a specific serine bond to produce a beta-subunit with a hydroxyl group at its C-terminus and an alpha-subunit with a pyruvoyl group at its N-terminus.</text>
</comment>
<comment type="similarity">
    <text evidence="1">Belongs to the PanD family.</text>
</comment>
<gene>
    <name evidence="1" type="primary">panD</name>
    <name type="ordered locus">BT_4309</name>
</gene>
<organism>
    <name type="scientific">Bacteroides thetaiotaomicron (strain ATCC 29148 / DSM 2079 / JCM 5827 / CCUG 10774 / NCTC 10582 / VPI-5482 / E50)</name>
    <dbReference type="NCBI Taxonomy" id="226186"/>
    <lineage>
        <taxon>Bacteria</taxon>
        <taxon>Pseudomonadati</taxon>
        <taxon>Bacteroidota</taxon>
        <taxon>Bacteroidia</taxon>
        <taxon>Bacteroidales</taxon>
        <taxon>Bacteroidaceae</taxon>
        <taxon>Bacteroides</taxon>
    </lineage>
</organism>